<evidence type="ECO:0000255" key="1">
    <source>
        <dbReference type="HAMAP-Rule" id="MF_00228"/>
    </source>
</evidence>
<comment type="function">
    <text evidence="1">Catalyzes the phosphorylation of the hydroxyl group of 4-methyl-5-beta-hydroxyethylthiazole (THZ).</text>
</comment>
<comment type="catalytic activity">
    <reaction evidence="1">
        <text>5-(2-hydroxyethyl)-4-methylthiazole + ATP = 4-methyl-5-(2-phosphooxyethyl)-thiazole + ADP + H(+)</text>
        <dbReference type="Rhea" id="RHEA:24212"/>
        <dbReference type="ChEBI" id="CHEBI:15378"/>
        <dbReference type="ChEBI" id="CHEBI:17957"/>
        <dbReference type="ChEBI" id="CHEBI:30616"/>
        <dbReference type="ChEBI" id="CHEBI:58296"/>
        <dbReference type="ChEBI" id="CHEBI:456216"/>
        <dbReference type="EC" id="2.7.1.50"/>
    </reaction>
</comment>
<comment type="cofactor">
    <cofactor evidence="1">
        <name>Mg(2+)</name>
        <dbReference type="ChEBI" id="CHEBI:18420"/>
    </cofactor>
</comment>
<comment type="pathway">
    <text evidence="1">Cofactor biosynthesis; thiamine diphosphate biosynthesis; 4-methyl-5-(2-phosphoethyl)-thiazole from 5-(2-hydroxyethyl)-4-methylthiazole: step 1/1.</text>
</comment>
<comment type="similarity">
    <text evidence="1">Belongs to the Thz kinase family.</text>
</comment>
<proteinExistence type="inferred from homology"/>
<sequence length="267" mass="27611">MSQHILKNTIEDLELVRSKSPLVHNITNYVVMNNTANALLAIGASPIMAHAIEEVEEMVTICSATVINIGTLSEPWIQSMEKAAKKAVSLGKPLVLDPVGAGASNIRNAAIRRILDAGNPTIVRGNASEILSTLSSSGKTKGVDATDSSESAVETGKSLSKVTGGVVVISGATDFILKGTDMAQISNGDALMTKVTGLGCTASALCGAFAAVQKDQFRAATSAMAVMGIAGEMAKSKTASPGSFQVAFLDALYELNADTIKQKLNAK</sequence>
<name>THIM_LEPBP</name>
<gene>
    <name evidence="1" type="primary">thiM</name>
    <name type="ordered locus">LEPBI_I2714</name>
</gene>
<reference key="1">
    <citation type="journal article" date="2008" name="PLoS ONE">
        <title>Genome sequence of the saprophyte Leptospira biflexa provides insights into the evolution of Leptospira and the pathogenesis of leptospirosis.</title>
        <authorList>
            <person name="Picardeau M."/>
            <person name="Bulach D.M."/>
            <person name="Bouchier C."/>
            <person name="Zuerner R.L."/>
            <person name="Zidane N."/>
            <person name="Wilson P.J."/>
            <person name="Creno S."/>
            <person name="Kuczek E.S."/>
            <person name="Bommezzadri S."/>
            <person name="Davis J.C."/>
            <person name="McGrath A."/>
            <person name="Johnson M.J."/>
            <person name="Boursaux-Eude C."/>
            <person name="Seemann T."/>
            <person name="Rouy Z."/>
            <person name="Coppel R.L."/>
            <person name="Rood J.I."/>
            <person name="Lajus A."/>
            <person name="Davies J.K."/>
            <person name="Medigue C."/>
            <person name="Adler B."/>
        </authorList>
    </citation>
    <scope>NUCLEOTIDE SEQUENCE [LARGE SCALE GENOMIC DNA]</scope>
    <source>
        <strain>Patoc 1 / ATCC 23582 / Paris</strain>
    </source>
</reference>
<keyword id="KW-0067">ATP-binding</keyword>
<keyword id="KW-0418">Kinase</keyword>
<keyword id="KW-0460">Magnesium</keyword>
<keyword id="KW-0479">Metal-binding</keyword>
<keyword id="KW-0547">Nucleotide-binding</keyword>
<keyword id="KW-1185">Reference proteome</keyword>
<keyword id="KW-0784">Thiamine biosynthesis</keyword>
<keyword id="KW-0808">Transferase</keyword>
<dbReference type="EC" id="2.7.1.50" evidence="1"/>
<dbReference type="EMBL" id="CP000786">
    <property type="protein sequence ID" value="ABZ98792.1"/>
    <property type="molecule type" value="Genomic_DNA"/>
</dbReference>
<dbReference type="RefSeq" id="WP_012389652.1">
    <property type="nucleotide sequence ID" value="NC_010602.1"/>
</dbReference>
<dbReference type="SMR" id="B0SMR8"/>
<dbReference type="STRING" id="456481.LEPBI_I2714"/>
<dbReference type="KEGG" id="lbi:LEPBI_I2714"/>
<dbReference type="HOGENOM" id="CLU_019943_0_1_12"/>
<dbReference type="OrthoDB" id="9778146at2"/>
<dbReference type="BioCyc" id="LBIF456481:LEPBI_RS13345-MONOMER"/>
<dbReference type="UniPathway" id="UPA00060">
    <property type="reaction ID" value="UER00139"/>
</dbReference>
<dbReference type="Proteomes" id="UP000001847">
    <property type="component" value="Chromosome I"/>
</dbReference>
<dbReference type="GO" id="GO:0005524">
    <property type="term" value="F:ATP binding"/>
    <property type="evidence" value="ECO:0007669"/>
    <property type="project" value="UniProtKB-UniRule"/>
</dbReference>
<dbReference type="GO" id="GO:0004417">
    <property type="term" value="F:hydroxyethylthiazole kinase activity"/>
    <property type="evidence" value="ECO:0007669"/>
    <property type="project" value="UniProtKB-UniRule"/>
</dbReference>
<dbReference type="GO" id="GO:0000287">
    <property type="term" value="F:magnesium ion binding"/>
    <property type="evidence" value="ECO:0007669"/>
    <property type="project" value="UniProtKB-UniRule"/>
</dbReference>
<dbReference type="GO" id="GO:0009228">
    <property type="term" value="P:thiamine biosynthetic process"/>
    <property type="evidence" value="ECO:0007669"/>
    <property type="project" value="UniProtKB-KW"/>
</dbReference>
<dbReference type="GO" id="GO:0009229">
    <property type="term" value="P:thiamine diphosphate biosynthetic process"/>
    <property type="evidence" value="ECO:0007669"/>
    <property type="project" value="UniProtKB-UniRule"/>
</dbReference>
<dbReference type="CDD" id="cd01170">
    <property type="entry name" value="THZ_kinase"/>
    <property type="match status" value="1"/>
</dbReference>
<dbReference type="Gene3D" id="3.40.1190.20">
    <property type="match status" value="1"/>
</dbReference>
<dbReference type="HAMAP" id="MF_00228">
    <property type="entry name" value="Thz_kinase"/>
    <property type="match status" value="1"/>
</dbReference>
<dbReference type="InterPro" id="IPR000417">
    <property type="entry name" value="Hyethyz_kinase"/>
</dbReference>
<dbReference type="InterPro" id="IPR029056">
    <property type="entry name" value="Ribokinase-like"/>
</dbReference>
<dbReference type="NCBIfam" id="NF006830">
    <property type="entry name" value="PRK09355.1"/>
    <property type="match status" value="1"/>
</dbReference>
<dbReference type="NCBIfam" id="TIGR00694">
    <property type="entry name" value="thiM"/>
    <property type="match status" value="1"/>
</dbReference>
<dbReference type="Pfam" id="PF02110">
    <property type="entry name" value="HK"/>
    <property type="match status" value="1"/>
</dbReference>
<dbReference type="PIRSF" id="PIRSF000513">
    <property type="entry name" value="Thz_kinase"/>
    <property type="match status" value="1"/>
</dbReference>
<dbReference type="PRINTS" id="PR01099">
    <property type="entry name" value="HYETHTZKNASE"/>
</dbReference>
<dbReference type="SUPFAM" id="SSF53613">
    <property type="entry name" value="Ribokinase-like"/>
    <property type="match status" value="1"/>
</dbReference>
<feature type="chain" id="PRO_0000383878" description="Hydroxyethylthiazole kinase">
    <location>
        <begin position="1"/>
        <end position="267"/>
    </location>
</feature>
<feature type="binding site" evidence="1">
    <location>
        <position position="48"/>
    </location>
    <ligand>
        <name>substrate</name>
    </ligand>
</feature>
<feature type="binding site" evidence="1">
    <location>
        <position position="124"/>
    </location>
    <ligand>
        <name>ATP</name>
        <dbReference type="ChEBI" id="CHEBI:30616"/>
    </ligand>
</feature>
<feature type="binding site" evidence="1">
    <location>
        <position position="170"/>
    </location>
    <ligand>
        <name>ATP</name>
        <dbReference type="ChEBI" id="CHEBI:30616"/>
    </ligand>
</feature>
<feature type="binding site" evidence="1">
    <location>
        <position position="197"/>
    </location>
    <ligand>
        <name>substrate</name>
    </ligand>
</feature>
<protein>
    <recommendedName>
        <fullName evidence="1">Hydroxyethylthiazole kinase</fullName>
        <ecNumber evidence="1">2.7.1.50</ecNumber>
    </recommendedName>
    <alternativeName>
        <fullName evidence="1">4-methyl-5-beta-hydroxyethylthiazole kinase</fullName>
        <shortName evidence="1">TH kinase</shortName>
        <shortName evidence="1">Thz kinase</shortName>
    </alternativeName>
</protein>
<organism>
    <name type="scientific">Leptospira biflexa serovar Patoc (strain Patoc 1 / ATCC 23582 / Paris)</name>
    <dbReference type="NCBI Taxonomy" id="456481"/>
    <lineage>
        <taxon>Bacteria</taxon>
        <taxon>Pseudomonadati</taxon>
        <taxon>Spirochaetota</taxon>
        <taxon>Spirochaetia</taxon>
        <taxon>Leptospirales</taxon>
        <taxon>Leptospiraceae</taxon>
        <taxon>Leptospira</taxon>
    </lineage>
</organism>
<accession>B0SMR8</accession>